<keyword id="KW-0687">Ribonucleoprotein</keyword>
<keyword id="KW-0689">Ribosomal protein</keyword>
<keyword id="KW-0694">RNA-binding</keyword>
<keyword id="KW-0699">rRNA-binding</keyword>
<proteinExistence type="inferred from homology"/>
<protein>
    <recommendedName>
        <fullName evidence="1">Small ribosomal subunit protein uS8</fullName>
    </recommendedName>
    <alternativeName>
        <fullName evidence="2">30S ribosomal protein S8</fullName>
    </alternativeName>
</protein>
<reference key="1">
    <citation type="journal article" date="2009" name="J. Bacteriol.">
        <title>The genome of Burkholderia cenocepacia J2315, an epidemic pathogen of cystic fibrosis patients.</title>
        <authorList>
            <person name="Holden M.T."/>
            <person name="Seth-Smith H.M."/>
            <person name="Crossman L.C."/>
            <person name="Sebaihia M."/>
            <person name="Bentley S.D."/>
            <person name="Cerdeno-Tarraga A.M."/>
            <person name="Thomson N.R."/>
            <person name="Bason N."/>
            <person name="Quail M.A."/>
            <person name="Sharp S."/>
            <person name="Cherevach I."/>
            <person name="Churcher C."/>
            <person name="Goodhead I."/>
            <person name="Hauser H."/>
            <person name="Holroyd N."/>
            <person name="Mungall K."/>
            <person name="Scott P."/>
            <person name="Walker D."/>
            <person name="White B."/>
            <person name="Rose H."/>
            <person name="Iversen P."/>
            <person name="Mil-Homens D."/>
            <person name="Rocha E.P."/>
            <person name="Fialho A.M."/>
            <person name="Baldwin A."/>
            <person name="Dowson C."/>
            <person name="Barrell B.G."/>
            <person name="Govan J.R."/>
            <person name="Vandamme P."/>
            <person name="Hart C.A."/>
            <person name="Mahenthiralingam E."/>
            <person name="Parkhill J."/>
        </authorList>
    </citation>
    <scope>NUCLEOTIDE SEQUENCE [LARGE SCALE GENOMIC DNA]</scope>
    <source>
        <strain>ATCC BAA-245 / DSM 16553 / LMG 16656 / NCTC 13227 / J2315 / CF5610</strain>
    </source>
</reference>
<organism>
    <name type="scientific">Burkholderia cenocepacia (strain ATCC BAA-245 / DSM 16553 / LMG 16656 / NCTC 13227 / J2315 / CF5610)</name>
    <name type="common">Burkholderia cepacia (strain J2315)</name>
    <dbReference type="NCBI Taxonomy" id="216591"/>
    <lineage>
        <taxon>Bacteria</taxon>
        <taxon>Pseudomonadati</taxon>
        <taxon>Pseudomonadota</taxon>
        <taxon>Betaproteobacteria</taxon>
        <taxon>Burkholderiales</taxon>
        <taxon>Burkholderiaceae</taxon>
        <taxon>Burkholderia</taxon>
        <taxon>Burkholderia cepacia complex</taxon>
    </lineage>
</organism>
<feature type="chain" id="PRO_1000140523" description="Small ribosomal subunit protein uS8">
    <location>
        <begin position="1"/>
        <end position="131"/>
    </location>
</feature>
<evidence type="ECO:0000255" key="1">
    <source>
        <dbReference type="HAMAP-Rule" id="MF_01302"/>
    </source>
</evidence>
<evidence type="ECO:0000305" key="2"/>
<accession>B4E5D4</accession>
<gene>
    <name evidence="1" type="primary">rpsH</name>
    <name type="ordered locus">BceJ2315_02510</name>
    <name type="ORF">BCAL0248</name>
</gene>
<name>RS8_BURCJ</name>
<sequence length="131" mass="14199">MSMSDPIADMLTRIRNAQMVEKVSVAMPSSKVKVAIAQVLKDEGYIDDFAVKAEGAKSELNIALKYYAGRPVIERLERVSKPGLRVYRGRNDIPQVMNGLGVAIVSTPKGVMTDRKARATGVGGEVICYVA</sequence>
<dbReference type="EMBL" id="AM747720">
    <property type="protein sequence ID" value="CAR50559.1"/>
    <property type="molecule type" value="Genomic_DNA"/>
</dbReference>
<dbReference type="RefSeq" id="WP_006477185.1">
    <property type="nucleotide sequence ID" value="NC_011000.1"/>
</dbReference>
<dbReference type="SMR" id="B4E5D4"/>
<dbReference type="GeneID" id="98107146"/>
<dbReference type="KEGG" id="bcj:BCAL0248"/>
<dbReference type="eggNOG" id="COG0096">
    <property type="taxonomic scope" value="Bacteria"/>
</dbReference>
<dbReference type="HOGENOM" id="CLU_098428_0_0_4"/>
<dbReference type="BioCyc" id="BCEN216591:G1G1V-291-MONOMER"/>
<dbReference type="Proteomes" id="UP000001035">
    <property type="component" value="Chromosome 1"/>
</dbReference>
<dbReference type="GO" id="GO:1990904">
    <property type="term" value="C:ribonucleoprotein complex"/>
    <property type="evidence" value="ECO:0007669"/>
    <property type="project" value="UniProtKB-KW"/>
</dbReference>
<dbReference type="GO" id="GO:0005840">
    <property type="term" value="C:ribosome"/>
    <property type="evidence" value="ECO:0007669"/>
    <property type="project" value="UniProtKB-KW"/>
</dbReference>
<dbReference type="GO" id="GO:0019843">
    <property type="term" value="F:rRNA binding"/>
    <property type="evidence" value="ECO:0007669"/>
    <property type="project" value="UniProtKB-UniRule"/>
</dbReference>
<dbReference type="GO" id="GO:0003735">
    <property type="term" value="F:structural constituent of ribosome"/>
    <property type="evidence" value="ECO:0007669"/>
    <property type="project" value="InterPro"/>
</dbReference>
<dbReference type="GO" id="GO:0006412">
    <property type="term" value="P:translation"/>
    <property type="evidence" value="ECO:0007669"/>
    <property type="project" value="UniProtKB-UniRule"/>
</dbReference>
<dbReference type="FunFam" id="3.30.1370.30:FF:000003">
    <property type="entry name" value="30S ribosomal protein S8"/>
    <property type="match status" value="1"/>
</dbReference>
<dbReference type="FunFam" id="3.30.1490.10:FF:000001">
    <property type="entry name" value="30S ribosomal protein S8"/>
    <property type="match status" value="1"/>
</dbReference>
<dbReference type="Gene3D" id="3.30.1370.30">
    <property type="match status" value="1"/>
</dbReference>
<dbReference type="Gene3D" id="3.30.1490.10">
    <property type="match status" value="1"/>
</dbReference>
<dbReference type="HAMAP" id="MF_01302_B">
    <property type="entry name" value="Ribosomal_uS8_B"/>
    <property type="match status" value="1"/>
</dbReference>
<dbReference type="InterPro" id="IPR000630">
    <property type="entry name" value="Ribosomal_uS8"/>
</dbReference>
<dbReference type="InterPro" id="IPR047863">
    <property type="entry name" value="Ribosomal_uS8_CS"/>
</dbReference>
<dbReference type="InterPro" id="IPR035987">
    <property type="entry name" value="Ribosomal_uS8_sf"/>
</dbReference>
<dbReference type="NCBIfam" id="NF001109">
    <property type="entry name" value="PRK00136.1"/>
    <property type="match status" value="1"/>
</dbReference>
<dbReference type="PANTHER" id="PTHR11758">
    <property type="entry name" value="40S RIBOSOMAL PROTEIN S15A"/>
    <property type="match status" value="1"/>
</dbReference>
<dbReference type="Pfam" id="PF00410">
    <property type="entry name" value="Ribosomal_S8"/>
    <property type="match status" value="1"/>
</dbReference>
<dbReference type="SUPFAM" id="SSF56047">
    <property type="entry name" value="Ribosomal protein S8"/>
    <property type="match status" value="1"/>
</dbReference>
<dbReference type="PROSITE" id="PS00053">
    <property type="entry name" value="RIBOSOMAL_S8"/>
    <property type="match status" value="1"/>
</dbReference>
<comment type="function">
    <text evidence="1">One of the primary rRNA binding proteins, it binds directly to 16S rRNA central domain where it helps coordinate assembly of the platform of the 30S subunit.</text>
</comment>
<comment type="subunit">
    <text evidence="1">Part of the 30S ribosomal subunit. Contacts proteins S5 and S12.</text>
</comment>
<comment type="similarity">
    <text evidence="1">Belongs to the universal ribosomal protein uS8 family.</text>
</comment>